<proteinExistence type="inferred from homology"/>
<gene>
    <name type="primary">ulaC</name>
    <name type="ordered locus">SF4350</name>
    <name type="ordered locus">S4620</name>
</gene>
<accession>Q83P28</accession>
<accession>Q7BYI5</accession>
<name>ULAC_SHIFL</name>
<sequence>MKLHDSLAENKSIRLQAEAETWQDAVKIGVDLLVAADVVEPRYYQAILDAVEQHGPYFVLAPGLAMPHGRPEEGVKKTGFALVTLKKPLEFNHEDNDPVDILITMAAVDANTHQEVGIMQIVNLFEDEENFDRLRACRTEQEVLDLIDRTNAAA</sequence>
<organism>
    <name type="scientific">Shigella flexneri</name>
    <dbReference type="NCBI Taxonomy" id="623"/>
    <lineage>
        <taxon>Bacteria</taxon>
        <taxon>Pseudomonadati</taxon>
        <taxon>Pseudomonadota</taxon>
        <taxon>Gammaproteobacteria</taxon>
        <taxon>Enterobacterales</taxon>
        <taxon>Enterobacteriaceae</taxon>
        <taxon>Shigella</taxon>
    </lineage>
</organism>
<keyword id="KW-0963">Cytoplasm</keyword>
<keyword id="KW-0418">Kinase</keyword>
<keyword id="KW-0597">Phosphoprotein</keyword>
<keyword id="KW-0598">Phosphotransferase system</keyword>
<keyword id="KW-1185">Reference proteome</keyword>
<keyword id="KW-0808">Transferase</keyword>
<keyword id="KW-0813">Transport</keyword>
<reference key="1">
    <citation type="journal article" date="2002" name="Nucleic Acids Res.">
        <title>Genome sequence of Shigella flexneri 2a: insights into pathogenicity through comparison with genomes of Escherichia coli K12 and O157.</title>
        <authorList>
            <person name="Jin Q."/>
            <person name="Yuan Z."/>
            <person name="Xu J."/>
            <person name="Wang Y."/>
            <person name="Shen Y."/>
            <person name="Lu W."/>
            <person name="Wang J."/>
            <person name="Liu H."/>
            <person name="Yang J."/>
            <person name="Yang F."/>
            <person name="Zhang X."/>
            <person name="Zhang J."/>
            <person name="Yang G."/>
            <person name="Wu H."/>
            <person name="Qu D."/>
            <person name="Dong J."/>
            <person name="Sun L."/>
            <person name="Xue Y."/>
            <person name="Zhao A."/>
            <person name="Gao Y."/>
            <person name="Zhu J."/>
            <person name="Kan B."/>
            <person name="Ding K."/>
            <person name="Chen S."/>
            <person name="Cheng H."/>
            <person name="Yao Z."/>
            <person name="He B."/>
            <person name="Chen R."/>
            <person name="Ma D."/>
            <person name="Qiang B."/>
            <person name="Wen Y."/>
            <person name="Hou Y."/>
            <person name="Yu J."/>
        </authorList>
    </citation>
    <scope>NUCLEOTIDE SEQUENCE [LARGE SCALE GENOMIC DNA]</scope>
    <source>
        <strain>301 / Serotype 2a</strain>
    </source>
</reference>
<reference key="2">
    <citation type="journal article" date="2003" name="Infect. Immun.">
        <title>Complete genome sequence and comparative genomics of Shigella flexneri serotype 2a strain 2457T.</title>
        <authorList>
            <person name="Wei J."/>
            <person name="Goldberg M.B."/>
            <person name="Burland V."/>
            <person name="Venkatesan M.M."/>
            <person name="Deng W."/>
            <person name="Fournier G."/>
            <person name="Mayhew G.F."/>
            <person name="Plunkett G. III"/>
            <person name="Rose D.J."/>
            <person name="Darling A."/>
            <person name="Mau B."/>
            <person name="Perna N.T."/>
            <person name="Payne S.M."/>
            <person name="Runyen-Janecky L.J."/>
            <person name="Zhou S."/>
            <person name="Schwartz D.C."/>
            <person name="Blattner F.R."/>
        </authorList>
    </citation>
    <scope>NUCLEOTIDE SEQUENCE [LARGE SCALE GENOMIC DNA]</scope>
    <source>
        <strain>ATCC 700930 / 2457T / Serotype 2a</strain>
    </source>
</reference>
<feature type="chain" id="PRO_0000230320" description="Ascorbate-specific PTS system EIIA component">
    <location>
        <begin position="1"/>
        <end position="154"/>
    </location>
</feature>
<feature type="domain" description="PTS EIIA type-2" evidence="2">
    <location>
        <begin position="6"/>
        <end position="150"/>
    </location>
</feature>
<feature type="active site" description="Tele-phosphohistidine intermediate" evidence="2">
    <location>
        <position position="68"/>
    </location>
</feature>
<feature type="modified residue" description="Phosphohistidine" evidence="1">
    <location>
        <position position="68"/>
    </location>
</feature>
<dbReference type="EMBL" id="AE005674">
    <property type="protein sequence ID" value="AAN45767.1"/>
    <property type="molecule type" value="Genomic_DNA"/>
</dbReference>
<dbReference type="EMBL" id="AE014073">
    <property type="protein sequence ID" value="AAP19549.1"/>
    <property type="molecule type" value="Genomic_DNA"/>
</dbReference>
<dbReference type="RefSeq" id="WP_000766068.1">
    <property type="nucleotide sequence ID" value="NZ_WPGW01000113.1"/>
</dbReference>
<dbReference type="SMR" id="Q83P28"/>
<dbReference type="STRING" id="198214.SF4350"/>
<dbReference type="PaxDb" id="198214-SF4350"/>
<dbReference type="KEGG" id="sfl:SF4350"/>
<dbReference type="KEGG" id="sfx:S4620"/>
<dbReference type="PATRIC" id="fig|198214.7.peg.5129"/>
<dbReference type="HOGENOM" id="CLU_072531_2_0_6"/>
<dbReference type="Proteomes" id="UP000001006">
    <property type="component" value="Chromosome"/>
</dbReference>
<dbReference type="Proteomes" id="UP000002673">
    <property type="component" value="Chromosome"/>
</dbReference>
<dbReference type="GO" id="GO:0005737">
    <property type="term" value="C:cytoplasm"/>
    <property type="evidence" value="ECO:0007669"/>
    <property type="project" value="UniProtKB-SubCell"/>
</dbReference>
<dbReference type="GO" id="GO:0016301">
    <property type="term" value="F:kinase activity"/>
    <property type="evidence" value="ECO:0007669"/>
    <property type="project" value="UniProtKB-KW"/>
</dbReference>
<dbReference type="GO" id="GO:0009401">
    <property type="term" value="P:phosphoenolpyruvate-dependent sugar phosphotransferase system"/>
    <property type="evidence" value="ECO:0007669"/>
    <property type="project" value="UniProtKB-KW"/>
</dbReference>
<dbReference type="CDD" id="cd00211">
    <property type="entry name" value="PTS_IIA_fru"/>
    <property type="match status" value="1"/>
</dbReference>
<dbReference type="FunFam" id="3.40.930.10:FF:000005">
    <property type="entry name" value="Ascorbate-specific phosphotransferase enzyme IIA component"/>
    <property type="match status" value="1"/>
</dbReference>
<dbReference type="Gene3D" id="3.40.930.10">
    <property type="entry name" value="Mannitol-specific EII, Chain A"/>
    <property type="match status" value="1"/>
</dbReference>
<dbReference type="InterPro" id="IPR051351">
    <property type="entry name" value="Ascorbate-PTS_EIIA_comp"/>
</dbReference>
<dbReference type="InterPro" id="IPR016152">
    <property type="entry name" value="PTrfase/Anion_transptr"/>
</dbReference>
<dbReference type="InterPro" id="IPR002178">
    <property type="entry name" value="PTS_EIIA_type-2_dom"/>
</dbReference>
<dbReference type="NCBIfam" id="NF007694">
    <property type="entry name" value="PRK10372.1"/>
    <property type="match status" value="1"/>
</dbReference>
<dbReference type="PANTHER" id="PTHR36203">
    <property type="entry name" value="ASCORBATE-SPECIFIC PTS SYSTEM EIIA COMPONENT"/>
    <property type="match status" value="1"/>
</dbReference>
<dbReference type="PANTHER" id="PTHR36203:SF1">
    <property type="entry name" value="ASCORBATE-SPECIFIC PTS SYSTEM EIIA COMPONENT"/>
    <property type="match status" value="1"/>
</dbReference>
<dbReference type="Pfam" id="PF00359">
    <property type="entry name" value="PTS_EIIA_2"/>
    <property type="match status" value="1"/>
</dbReference>
<dbReference type="SUPFAM" id="SSF55804">
    <property type="entry name" value="Phoshotransferase/anion transport protein"/>
    <property type="match status" value="1"/>
</dbReference>
<dbReference type="PROSITE" id="PS51094">
    <property type="entry name" value="PTS_EIIA_TYPE_2"/>
    <property type="match status" value="1"/>
</dbReference>
<dbReference type="PROSITE" id="PS00372">
    <property type="entry name" value="PTS_EIIA_TYPE_2_HIS"/>
    <property type="match status" value="1"/>
</dbReference>
<protein>
    <recommendedName>
        <fullName evidence="1">Ascorbate-specific PTS system EIIA component</fullName>
    </recommendedName>
    <alternativeName>
        <fullName evidence="1">Ascorbate-specific phosphotransferase enzyme IIA component</fullName>
    </alternativeName>
</protein>
<evidence type="ECO:0000250" key="1">
    <source>
        <dbReference type="UniProtKB" id="P69820"/>
    </source>
</evidence>
<evidence type="ECO:0000255" key="2">
    <source>
        <dbReference type="PROSITE-ProRule" id="PRU00417"/>
    </source>
</evidence>
<evidence type="ECO:0000305" key="3"/>
<comment type="function">
    <text evidence="1">The phosphoenolpyruvate-dependent sugar phosphotransferase system (sugar PTS), a major carbohydrate active transport system, catalyzes the phosphorylation of incoming sugar substrates concomitantly with their translocation across the cell membrane. The enzyme II UlaABC PTS system is involved in ascorbate transport.</text>
</comment>
<comment type="subcellular location">
    <subcellularLocation>
        <location evidence="3">Cytoplasm</location>
    </subcellularLocation>
</comment>
<comment type="induction">
    <text evidence="1">Induced by L-ascorbate. Repressed by UlaR.</text>
</comment>
<comment type="domain">
    <text evidence="2">The PTS EIIA type-2 domain is phosphorylated by phospho-HPr on a histidyl residue. Then, it transfers the phosphoryl group to the PTS EIIB type-2 domain.</text>
</comment>